<name>VLPC_MESHY</name>
<comment type="function">
    <text>Responsible for the antigenic diversity for host adaptation.</text>
</comment>
<comment type="subcellular location">
    <subcellularLocation>
        <location evidence="2">Cell membrane</location>
        <topology evidence="2">Lipid-anchor</topology>
    </subcellularLocation>
</comment>
<comment type="miscellaneous">
    <text>The numbers of repeats can vary and is one of the basis of the antigenic diversity.</text>
</comment>
<accession>P29230</accession>
<feature type="signal peptide" evidence="2">
    <location>
        <begin position="1"/>
        <end position="29"/>
    </location>
</feature>
<feature type="chain" id="PRO_0000018215" description="Variant surface antigen C">
    <location>
        <begin position="30"/>
        <end position="160"/>
    </location>
</feature>
<feature type="repeat" description="1">
    <location>
        <begin position="86"/>
        <end position="97"/>
    </location>
</feature>
<feature type="repeat" description="2">
    <location>
        <begin position="98"/>
        <end position="109"/>
    </location>
</feature>
<feature type="repeat" description="3">
    <location>
        <begin position="110"/>
        <end position="121"/>
    </location>
</feature>
<feature type="repeat" description="4">
    <location>
        <begin position="122"/>
        <end position="133"/>
    </location>
</feature>
<feature type="repeat" description="5">
    <location>
        <begin position="134"/>
        <end position="145"/>
    </location>
</feature>
<feature type="repeat" description="6">
    <location>
        <begin position="146"/>
        <end position="157"/>
    </location>
</feature>
<feature type="region of interest" description="Disordered" evidence="1">
    <location>
        <begin position="32"/>
        <end position="160"/>
    </location>
</feature>
<feature type="region of interest" description="6 X 12 AA tandem repeats">
    <location>
        <begin position="86"/>
        <end position="157"/>
    </location>
</feature>
<feature type="compositionally biased region" description="Low complexity" evidence="1">
    <location>
        <begin position="38"/>
        <end position="54"/>
    </location>
</feature>
<feature type="compositionally biased region" description="Low complexity" evidence="1">
    <location>
        <begin position="62"/>
        <end position="87"/>
    </location>
</feature>
<feature type="compositionally biased region" description="Polar residues" evidence="1">
    <location>
        <begin position="93"/>
        <end position="160"/>
    </location>
</feature>
<feature type="lipid moiety-binding region" description="N-palmitoyl cysteine" evidence="2">
    <location>
        <position position="30"/>
    </location>
</feature>
<feature type="lipid moiety-binding region" description="S-diacylglycerol cysteine" evidence="2">
    <location>
        <position position="30"/>
    </location>
</feature>
<keyword id="KW-1003">Cell membrane</keyword>
<keyword id="KW-0449">Lipoprotein</keyword>
<keyword id="KW-0472">Membrane</keyword>
<keyword id="KW-0564">Palmitate</keyword>
<keyword id="KW-0677">Repeat</keyword>
<keyword id="KW-0732">Signal</keyword>
<reference key="1">
    <citation type="journal article" date="1991" name="EMBO J.">
        <title>Molecular basis of Mycoplasma surface antigenic variation: a novel set of divergent genes undergo spontaneous mutation of periodic coding regions and 5' regulatory sequences.</title>
        <authorList>
            <person name="Yogev D."/>
            <person name="Rosengarten R."/>
            <person name="Watson-Mckown R."/>
            <person name="Wise K.S."/>
        </authorList>
    </citation>
    <scope>NUCLEOTIDE SEQUENCE [GENOMIC DNA]</scope>
    <source>
        <strain>SK76</strain>
    </source>
</reference>
<organism>
    <name type="scientific">Mesomycoplasma hyorhinis</name>
    <name type="common">Mycoplasma hyorhinis</name>
    <dbReference type="NCBI Taxonomy" id="2100"/>
    <lineage>
        <taxon>Bacteria</taxon>
        <taxon>Bacillati</taxon>
        <taxon>Mycoplasmatota</taxon>
        <taxon>Mycoplasmoidales</taxon>
        <taxon>Metamycoplasmataceae</taxon>
        <taxon>Mesomycoplasma</taxon>
    </lineage>
</organism>
<dbReference type="EMBL" id="X62936">
    <property type="protein sequence ID" value="CAA44710.1"/>
    <property type="molecule type" value="Genomic_DNA"/>
</dbReference>
<dbReference type="PIR" id="S18658">
    <property type="entry name" value="S18658"/>
</dbReference>
<dbReference type="SMR" id="P29230"/>
<dbReference type="GO" id="GO:0005886">
    <property type="term" value="C:plasma membrane"/>
    <property type="evidence" value="ECO:0007669"/>
    <property type="project" value="UniProtKB-SubCell"/>
</dbReference>
<dbReference type="InterPro" id="IPR049890">
    <property type="entry name" value="VlpA-F-like_signal"/>
</dbReference>
<dbReference type="InterPro" id="IPR054819">
    <property type="entry name" value="VlpC_N"/>
</dbReference>
<dbReference type="NCBIfam" id="NF033817">
    <property type="entry name" value="Mplas_variab_LP"/>
    <property type="match status" value="1"/>
</dbReference>
<dbReference type="NCBIfam" id="NF045730">
    <property type="entry name" value="VlpC_Nterm"/>
    <property type="match status" value="1"/>
</dbReference>
<dbReference type="PROSITE" id="PS51257">
    <property type="entry name" value="PROKAR_LIPOPROTEIN"/>
    <property type="match status" value="1"/>
</dbReference>
<evidence type="ECO:0000256" key="1">
    <source>
        <dbReference type="SAM" id="MobiDB-lite"/>
    </source>
</evidence>
<evidence type="ECO:0000305" key="2"/>
<proteinExistence type="predicted"/>
<sequence>MKKSIFSKKLLVSFGSLVALASIPLIAISCGQTNTDKSQQPGSGSSTSGDQSGTTTGGHSGSGTSTSGGQSGTTSGSGTTTGEQTETAPKSPESGSQEATPKSPESGSQEATPKSPESGSQEAAPKSSESGSQEAAPKSSESGSQEAAPKSSESGSQKTT</sequence>
<gene>
    <name type="primary">vlpC</name>
</gene>
<protein>
    <recommendedName>
        <fullName>Variant surface antigen C</fullName>
    </recommendedName>
    <alternativeName>
        <fullName>VlpC prolipoprotein</fullName>
    </alternativeName>
</protein>